<gene>
    <name type="primary">pepN</name>
    <name type="synonym">lap</name>
    <name type="ordered locus">llmg_0319</name>
</gene>
<feature type="initiator methionine" description="Removed" evidence="3">
    <location>
        <position position="1"/>
    </location>
</feature>
<feature type="chain" id="PRO_0000285237" description="Aminopeptidase N">
    <location>
        <begin position="2"/>
        <end position="846"/>
    </location>
</feature>
<feature type="active site" description="Proton acceptor" evidence="2">
    <location>
        <position position="289"/>
    </location>
</feature>
<feature type="binding site" evidence="1">
    <location>
        <position position="120"/>
    </location>
    <ligand>
        <name>substrate</name>
    </ligand>
</feature>
<feature type="binding site" evidence="1">
    <location>
        <begin position="252"/>
        <end position="256"/>
    </location>
    <ligand>
        <name>substrate</name>
    </ligand>
</feature>
<feature type="binding site" evidence="2">
    <location>
        <position position="288"/>
    </location>
    <ligand>
        <name>Zn(2+)</name>
        <dbReference type="ChEBI" id="CHEBI:29105"/>
        <note>catalytic</note>
    </ligand>
</feature>
<feature type="binding site" evidence="2">
    <location>
        <position position="292"/>
    </location>
    <ligand>
        <name>Zn(2+)</name>
        <dbReference type="ChEBI" id="CHEBI:29105"/>
        <note>catalytic</note>
    </ligand>
</feature>
<feature type="binding site" evidence="2">
    <location>
        <position position="311"/>
    </location>
    <ligand>
        <name>Zn(2+)</name>
        <dbReference type="ChEBI" id="CHEBI:29105"/>
        <note>catalytic</note>
    </ligand>
</feature>
<feature type="site" description="Transition state stabilizer" evidence="1">
    <location>
        <position position="375"/>
    </location>
</feature>
<name>AMPN_LACLM</name>
<dbReference type="EC" id="3.4.11.2"/>
<dbReference type="EMBL" id="M87840">
    <property type="protein sequence ID" value="AAA25205.1"/>
    <property type="molecule type" value="Genomic_DNA"/>
</dbReference>
<dbReference type="EMBL" id="S39955">
    <property type="protein sequence ID" value="AAB22460.1"/>
    <property type="molecule type" value="Genomic_DNA"/>
</dbReference>
<dbReference type="EMBL" id="AM406671">
    <property type="protein sequence ID" value="CAL96925.1"/>
    <property type="molecule type" value="Genomic_DNA"/>
</dbReference>
<dbReference type="EMBL" id="M65867">
    <property type="protein sequence ID" value="AAA25162.1"/>
    <property type="molecule type" value="Genomic_DNA"/>
</dbReference>
<dbReference type="PIR" id="S23157">
    <property type="entry name" value="S23157"/>
</dbReference>
<dbReference type="RefSeq" id="WP_011834382.1">
    <property type="nucleotide sequence ID" value="NC_009004.1"/>
</dbReference>
<dbReference type="SMR" id="A2RI32"/>
<dbReference type="STRING" id="416870.llmg_0319"/>
<dbReference type="MEROPS" id="M01.002"/>
<dbReference type="KEGG" id="llm:llmg_0319"/>
<dbReference type="eggNOG" id="COG0308">
    <property type="taxonomic scope" value="Bacteria"/>
</dbReference>
<dbReference type="HOGENOM" id="CLU_003705_0_1_9"/>
<dbReference type="OrthoDB" id="100605at2"/>
<dbReference type="PhylomeDB" id="A2RI32"/>
<dbReference type="Proteomes" id="UP000000364">
    <property type="component" value="Chromosome"/>
</dbReference>
<dbReference type="GO" id="GO:0005737">
    <property type="term" value="C:cytoplasm"/>
    <property type="evidence" value="ECO:0007669"/>
    <property type="project" value="UniProtKB-SubCell"/>
</dbReference>
<dbReference type="GO" id="GO:0005615">
    <property type="term" value="C:extracellular space"/>
    <property type="evidence" value="ECO:0007669"/>
    <property type="project" value="TreeGrafter"/>
</dbReference>
<dbReference type="GO" id="GO:0016020">
    <property type="term" value="C:membrane"/>
    <property type="evidence" value="ECO:0007669"/>
    <property type="project" value="TreeGrafter"/>
</dbReference>
<dbReference type="GO" id="GO:0016285">
    <property type="term" value="F:alanyl aminopeptidase activity"/>
    <property type="evidence" value="ECO:0007669"/>
    <property type="project" value="UniProtKB-EC"/>
</dbReference>
<dbReference type="GO" id="GO:0070006">
    <property type="term" value="F:metalloaminopeptidase activity"/>
    <property type="evidence" value="ECO:0007669"/>
    <property type="project" value="TreeGrafter"/>
</dbReference>
<dbReference type="GO" id="GO:0042277">
    <property type="term" value="F:peptide binding"/>
    <property type="evidence" value="ECO:0007669"/>
    <property type="project" value="TreeGrafter"/>
</dbReference>
<dbReference type="GO" id="GO:0008270">
    <property type="term" value="F:zinc ion binding"/>
    <property type="evidence" value="ECO:0007669"/>
    <property type="project" value="InterPro"/>
</dbReference>
<dbReference type="GO" id="GO:0043171">
    <property type="term" value="P:peptide catabolic process"/>
    <property type="evidence" value="ECO:0007669"/>
    <property type="project" value="TreeGrafter"/>
</dbReference>
<dbReference type="GO" id="GO:0006508">
    <property type="term" value="P:proteolysis"/>
    <property type="evidence" value="ECO:0007669"/>
    <property type="project" value="UniProtKB-KW"/>
</dbReference>
<dbReference type="CDD" id="cd09601">
    <property type="entry name" value="M1_APN-Q_like"/>
    <property type="match status" value="1"/>
</dbReference>
<dbReference type="FunFam" id="1.10.390.10:FF:000013">
    <property type="entry name" value="Aminopeptidase N"/>
    <property type="match status" value="1"/>
</dbReference>
<dbReference type="Gene3D" id="1.25.50.20">
    <property type="match status" value="1"/>
</dbReference>
<dbReference type="Gene3D" id="1.10.390.10">
    <property type="entry name" value="Neutral Protease Domain 2"/>
    <property type="match status" value="1"/>
</dbReference>
<dbReference type="Gene3D" id="2.60.40.1730">
    <property type="entry name" value="tricorn interacting facor f3 domain"/>
    <property type="match status" value="1"/>
</dbReference>
<dbReference type="InterPro" id="IPR045357">
    <property type="entry name" value="Aminopeptidase_N-like_N"/>
</dbReference>
<dbReference type="InterPro" id="IPR042097">
    <property type="entry name" value="Aminopeptidase_N-like_N_sf"/>
</dbReference>
<dbReference type="InterPro" id="IPR024571">
    <property type="entry name" value="ERAP1-like_C_dom"/>
</dbReference>
<dbReference type="InterPro" id="IPR034016">
    <property type="entry name" value="M1_APN-typ"/>
</dbReference>
<dbReference type="InterPro" id="IPR001930">
    <property type="entry name" value="Peptidase_M1"/>
</dbReference>
<dbReference type="InterPro" id="IPR050344">
    <property type="entry name" value="Peptidase_M1_aminopeptidases"/>
</dbReference>
<dbReference type="InterPro" id="IPR014782">
    <property type="entry name" value="Peptidase_M1_dom"/>
</dbReference>
<dbReference type="InterPro" id="IPR027268">
    <property type="entry name" value="Peptidase_M4/M1_CTD_sf"/>
</dbReference>
<dbReference type="PANTHER" id="PTHR11533">
    <property type="entry name" value="PROTEASE M1 ZINC METALLOPROTEASE"/>
    <property type="match status" value="1"/>
</dbReference>
<dbReference type="PANTHER" id="PTHR11533:SF174">
    <property type="entry name" value="PUROMYCIN-SENSITIVE AMINOPEPTIDASE-RELATED"/>
    <property type="match status" value="1"/>
</dbReference>
<dbReference type="Pfam" id="PF11838">
    <property type="entry name" value="ERAP1_C"/>
    <property type="match status" value="1"/>
</dbReference>
<dbReference type="Pfam" id="PF01433">
    <property type="entry name" value="Peptidase_M1"/>
    <property type="match status" value="1"/>
</dbReference>
<dbReference type="Pfam" id="PF17900">
    <property type="entry name" value="Peptidase_M1_N"/>
    <property type="match status" value="1"/>
</dbReference>
<dbReference type="PRINTS" id="PR00756">
    <property type="entry name" value="ALADIPTASE"/>
</dbReference>
<dbReference type="SUPFAM" id="SSF63737">
    <property type="entry name" value="Leukotriene A4 hydrolase N-terminal domain"/>
    <property type="match status" value="1"/>
</dbReference>
<dbReference type="SUPFAM" id="SSF55486">
    <property type="entry name" value="Metalloproteases ('zincins'), catalytic domain"/>
    <property type="match status" value="1"/>
</dbReference>
<dbReference type="PROSITE" id="PS00142">
    <property type="entry name" value="ZINC_PROTEASE"/>
    <property type="match status" value="1"/>
</dbReference>
<evidence type="ECO:0000250" key="1"/>
<evidence type="ECO:0000255" key="2">
    <source>
        <dbReference type="PROSITE-ProRule" id="PRU10095"/>
    </source>
</evidence>
<evidence type="ECO:0000269" key="3">
    <source>
    </source>
</evidence>
<evidence type="ECO:0000305" key="4"/>
<organism>
    <name type="scientific">Lactococcus lactis subsp. cremoris (strain MG1363)</name>
    <dbReference type="NCBI Taxonomy" id="416870"/>
    <lineage>
        <taxon>Bacteria</taxon>
        <taxon>Bacillati</taxon>
        <taxon>Bacillota</taxon>
        <taxon>Bacilli</taxon>
        <taxon>Lactobacillales</taxon>
        <taxon>Streptococcaceae</taxon>
        <taxon>Lactococcus</taxon>
        <taxon>Lactococcus cremoris subsp. cremoris</taxon>
    </lineage>
</organism>
<protein>
    <recommendedName>
        <fullName>Aminopeptidase N</fullName>
        <ecNumber>3.4.11.2</ecNumber>
    </recommendedName>
    <alternativeName>
        <fullName>Alanine aminopeptidase</fullName>
    </alternativeName>
    <alternativeName>
        <fullName>Lysyl aminopeptidase</fullName>
        <shortName>Lys-AP</shortName>
    </alternativeName>
</protein>
<keyword id="KW-0031">Aminopeptidase</keyword>
<keyword id="KW-0963">Cytoplasm</keyword>
<keyword id="KW-0903">Direct protein sequencing</keyword>
<keyword id="KW-0378">Hydrolase</keyword>
<keyword id="KW-0479">Metal-binding</keyword>
<keyword id="KW-0482">Metalloprotease</keyword>
<keyword id="KW-0645">Protease</keyword>
<keyword id="KW-0862">Zinc</keyword>
<reference key="1">
    <citation type="journal article" date="1992" name="FEBS Lett.">
        <title>Characterization of the Lactococcus lactis pepN gene encoding an aminopeptidase homologous to mammalian aminopeptidase N.</title>
        <authorList>
            <person name="Tan P.S.T."/>
            <person name="van Alen-Boerrigter I.J."/>
            <person name="Poolman B."/>
            <person name="Siezen R.J."/>
            <person name="de Vos W.M."/>
            <person name="Konings W.N."/>
        </authorList>
    </citation>
    <scope>NUCLEOTIDE SEQUENCE [GENOMIC DNA]</scope>
    <scope>PROTEIN SEQUENCE OF 2-25</scope>
</reference>
<reference key="2">
    <citation type="journal article" date="2007" name="J. Bacteriol.">
        <title>The complete genome sequence of the lactic acid bacterial paradigm Lactococcus lactis subsp. cremoris MG1363.</title>
        <authorList>
            <person name="Wegmann U."/>
            <person name="O'Connell-Motherway M."/>
            <person name="Zomer A."/>
            <person name="Buist G."/>
            <person name="Shearman C."/>
            <person name="Canchaya C."/>
            <person name="Ventura M."/>
            <person name="Goesmann A."/>
            <person name="Gasson M.J."/>
            <person name="Kuipers O.P."/>
            <person name="van Sinderen D."/>
            <person name="Kok J."/>
        </authorList>
    </citation>
    <scope>NUCLEOTIDE SEQUENCE [LARGE SCALE GENOMIC DNA]</scope>
    <source>
        <strain>MG1363</strain>
    </source>
</reference>
<reference key="3">
    <citation type="journal article" date="1991" name="Appl. Environ. Microbiol.">
        <title>Characterization and overexpression of the Lactococcus lactis pepN gene and localization of its product, aminopeptidase N.</title>
        <authorList>
            <person name="van Alen-Boerrigter I.J."/>
            <person name="Baankreis R."/>
            <person name="de Vos W.M."/>
        </authorList>
    </citation>
    <scope>NUCLEOTIDE SEQUENCE [GENOMIC DNA] OF 1-167</scope>
    <scope>CHARACTERIZATION</scope>
</reference>
<comment type="function">
    <text>Aminopeptidase with broad substrate specificity to several peptides. It has more affinity for oligopeptides than for dipeptides. It plays an essential role in the metabolism, it may be involved in nitrogen supply or protein turnover.</text>
</comment>
<comment type="catalytic activity">
    <reaction>
        <text>Release of an N-terminal amino acid, Xaa-|-Yaa- from a peptide, amide or arylamide. Xaa is preferably Ala, but may be most amino acids including Pro (slow action). When a terminal hydrophobic residue is followed by a prolyl residue, the two may be released as an intact Xaa-Pro dipeptide.</text>
        <dbReference type="EC" id="3.4.11.2"/>
    </reaction>
</comment>
<comment type="cofactor">
    <cofactor evidence="1">
        <name>Zn(2+)</name>
        <dbReference type="ChEBI" id="CHEBI:29105"/>
    </cofactor>
    <text evidence="1">Binds 1 zinc ion per subunit.</text>
</comment>
<comment type="subunit">
    <text>Monomer.</text>
</comment>
<comment type="subcellular location">
    <subcellularLocation>
        <location>Cytoplasm</location>
    </subcellularLocation>
    <text>It may be secreted through an unknown mechanism.</text>
</comment>
<comment type="similarity">
    <text evidence="4">Belongs to the peptidase M1 family.</text>
</comment>
<sequence length="846" mass="95369">MAVKRLIETFVPENYKIFLDIDRKTKKIKGQVAITGEAKDTVVSFHTKGLHFNKVRAFSVDTNFIENEEDEEIVVKIGETGRVTVSFEYEAELTDNMMGIYPSYYEVNGEKKMLIGTQFESHFARQAFPSIDEPEAKATFDLSVKFDEEEGDIIVSNMPELLNINGIHVFERTVKMSSYLLAFVFGELQYKKGKTKSGVEVGAFATKAHSQAALDFPLDIAIRSIEFYEDYYQTPYPLPHSWHIALPDFSAGAMENWGCITYREVCMLVDPENATIQSKQYVATVIAHELAHQWFGDLVTMQWWDDLWLNESFANNMEYVCMDALEPSWNVWESFSISEANMALNRDATDGVQSVHVEVTHPDEIGTLFDPAIVYAKGSRLMVMLRKWLGDEDFAAGLALYFKRHQYGNTVGDNLWDALAEVSGKDVAAFMHSWVNQPGYPVVTAEVVDDTLILSQKQFFVGEGVDKGRLWNVPLNTNWTGLPDLLSSEKVEIPGFAALKTKNNGKALFLNDANMAHYIIDYKGALLTDLLSEVESLENVTKFQILQDRKLLAKAGVISYADVVNILPSFTNEESYLVNTGLSQLISELELFVDEDSETEKAFQSLVGKLFAKNYARLGWDKVAGESAGDESLRGIVLSKTLYSENADAKTKASQIFAAHKENLASIPADIRPIVLNNEIKTTNSAELVKTYRETYIKTSLQEFKRELEGAVALIKDEKVIAELLESFKNADIVKPQDIAFSWFYLLRNDFSQDAAWAWEKANWAFLEEKLGGDMSYDKFVIYPGNTFKTADKLAEYKAFFEPKLENQGLKRSIEMAIKQITARVALIDSQKAAVDKAITDIAEKL</sequence>
<accession>A2RI32</accession>
<accession>P37897</accession>
<proteinExistence type="evidence at protein level"/>